<sequence length="360" mass="39173">MTVLPDLLDFDPDAALALLGEWMAARGEPAYRAAQVFGRLWQRPVRSFDEMTELPKALREGLAGSFRITALELTTRQKSMDGTEKFLFRMHDGQLIETVAIPDGDRLTFCISSQAGCALQCAFCATGAMGFQRNLHPSEIAGQVRELRMLTPSIVPTNIVFMGMGEPLMNWKAVSPTLSLLNDPRALGIGARHITISTVGVLPGIVALAARPEQFRLAISIHAPSDALRRTLMPVNTKYPLADVIAAAREFDRRVTFEYVMLGGVNDQPEHAAQLAQLARDCRAFVNLIPLHPGGSMGFSPSTTPTINAFAKAIRARGVETAVRRSRGLDIAAACGQLRTERLGRRLPVAAQDHGEVHVA</sequence>
<proteinExistence type="inferred from homology"/>
<gene>
    <name evidence="1" type="primary">rlmN</name>
    <name type="ordered locus">GAU_1717</name>
</gene>
<feature type="chain" id="PRO_1000216120" description="Probable dual-specificity RNA methyltransferase RlmN">
    <location>
        <begin position="1"/>
        <end position="360"/>
    </location>
</feature>
<feature type="domain" description="Radical SAM core" evidence="2">
    <location>
        <begin position="103"/>
        <end position="330"/>
    </location>
</feature>
<feature type="active site" description="Proton acceptor" evidence="1">
    <location>
        <position position="97"/>
    </location>
</feature>
<feature type="active site" description="S-methylcysteine intermediate" evidence="1">
    <location>
        <position position="335"/>
    </location>
</feature>
<feature type="binding site" evidence="1">
    <location>
        <position position="117"/>
    </location>
    <ligand>
        <name>[4Fe-4S] cluster</name>
        <dbReference type="ChEBI" id="CHEBI:49883"/>
        <note>4Fe-4S-S-AdoMet</note>
    </ligand>
</feature>
<feature type="binding site" evidence="1">
    <location>
        <position position="121"/>
    </location>
    <ligand>
        <name>[4Fe-4S] cluster</name>
        <dbReference type="ChEBI" id="CHEBI:49883"/>
        <note>4Fe-4S-S-AdoMet</note>
    </ligand>
</feature>
<feature type="binding site" evidence="1">
    <location>
        <position position="124"/>
    </location>
    <ligand>
        <name>[4Fe-4S] cluster</name>
        <dbReference type="ChEBI" id="CHEBI:49883"/>
        <note>4Fe-4S-S-AdoMet</note>
    </ligand>
</feature>
<feature type="binding site" evidence="1">
    <location>
        <begin position="165"/>
        <end position="166"/>
    </location>
    <ligand>
        <name>S-adenosyl-L-methionine</name>
        <dbReference type="ChEBI" id="CHEBI:59789"/>
    </ligand>
</feature>
<feature type="binding site" evidence="1">
    <location>
        <position position="197"/>
    </location>
    <ligand>
        <name>S-adenosyl-L-methionine</name>
        <dbReference type="ChEBI" id="CHEBI:59789"/>
    </ligand>
</feature>
<feature type="binding site" evidence="1">
    <location>
        <begin position="220"/>
        <end position="222"/>
    </location>
    <ligand>
        <name>S-adenosyl-L-methionine</name>
        <dbReference type="ChEBI" id="CHEBI:59789"/>
    </ligand>
</feature>
<feature type="binding site" evidence="1">
    <location>
        <position position="292"/>
    </location>
    <ligand>
        <name>S-adenosyl-L-methionine</name>
        <dbReference type="ChEBI" id="CHEBI:59789"/>
    </ligand>
</feature>
<feature type="disulfide bond" description="(transient)" evidence="1">
    <location>
        <begin position="110"/>
        <end position="335"/>
    </location>
</feature>
<dbReference type="EC" id="2.1.1.192" evidence="1"/>
<dbReference type="EMBL" id="AP009153">
    <property type="protein sequence ID" value="BAH38759.1"/>
    <property type="molecule type" value="Genomic_DNA"/>
</dbReference>
<dbReference type="RefSeq" id="WP_012683206.1">
    <property type="nucleotide sequence ID" value="NC_012489.1"/>
</dbReference>
<dbReference type="SMR" id="C1A949"/>
<dbReference type="STRING" id="379066.GAU_1717"/>
<dbReference type="KEGG" id="gau:GAU_1717"/>
<dbReference type="eggNOG" id="COG0820">
    <property type="taxonomic scope" value="Bacteria"/>
</dbReference>
<dbReference type="HOGENOM" id="CLU_029101_0_2_0"/>
<dbReference type="OrthoDB" id="9793973at2"/>
<dbReference type="Proteomes" id="UP000002209">
    <property type="component" value="Chromosome"/>
</dbReference>
<dbReference type="GO" id="GO:0005737">
    <property type="term" value="C:cytoplasm"/>
    <property type="evidence" value="ECO:0007669"/>
    <property type="project" value="UniProtKB-SubCell"/>
</dbReference>
<dbReference type="GO" id="GO:0051539">
    <property type="term" value="F:4 iron, 4 sulfur cluster binding"/>
    <property type="evidence" value="ECO:0007669"/>
    <property type="project" value="UniProtKB-UniRule"/>
</dbReference>
<dbReference type="GO" id="GO:0046872">
    <property type="term" value="F:metal ion binding"/>
    <property type="evidence" value="ECO:0007669"/>
    <property type="project" value="UniProtKB-KW"/>
</dbReference>
<dbReference type="GO" id="GO:0070040">
    <property type="term" value="F:rRNA (adenine(2503)-C2-)-methyltransferase activity"/>
    <property type="evidence" value="ECO:0007669"/>
    <property type="project" value="UniProtKB-UniRule"/>
</dbReference>
<dbReference type="GO" id="GO:0019843">
    <property type="term" value="F:rRNA binding"/>
    <property type="evidence" value="ECO:0007669"/>
    <property type="project" value="UniProtKB-UniRule"/>
</dbReference>
<dbReference type="GO" id="GO:0002935">
    <property type="term" value="F:tRNA (adenine(37)-C2)-methyltransferase activity"/>
    <property type="evidence" value="ECO:0007669"/>
    <property type="project" value="UniProtKB-UniRule"/>
</dbReference>
<dbReference type="GO" id="GO:0000049">
    <property type="term" value="F:tRNA binding"/>
    <property type="evidence" value="ECO:0007669"/>
    <property type="project" value="UniProtKB-UniRule"/>
</dbReference>
<dbReference type="GO" id="GO:0070475">
    <property type="term" value="P:rRNA base methylation"/>
    <property type="evidence" value="ECO:0007669"/>
    <property type="project" value="UniProtKB-UniRule"/>
</dbReference>
<dbReference type="GO" id="GO:0030488">
    <property type="term" value="P:tRNA methylation"/>
    <property type="evidence" value="ECO:0007669"/>
    <property type="project" value="UniProtKB-UniRule"/>
</dbReference>
<dbReference type="CDD" id="cd01335">
    <property type="entry name" value="Radical_SAM"/>
    <property type="match status" value="1"/>
</dbReference>
<dbReference type="FunFam" id="3.20.20.70:FF:000014">
    <property type="entry name" value="Probable dual-specificity RNA methyltransferase RlmN"/>
    <property type="match status" value="1"/>
</dbReference>
<dbReference type="Gene3D" id="1.10.150.530">
    <property type="match status" value="1"/>
</dbReference>
<dbReference type="Gene3D" id="3.20.20.70">
    <property type="entry name" value="Aldolase class I"/>
    <property type="match status" value="1"/>
</dbReference>
<dbReference type="HAMAP" id="MF_01849">
    <property type="entry name" value="RNA_methyltr_RlmN"/>
    <property type="match status" value="1"/>
</dbReference>
<dbReference type="InterPro" id="IPR013785">
    <property type="entry name" value="Aldolase_TIM"/>
</dbReference>
<dbReference type="InterPro" id="IPR040072">
    <property type="entry name" value="Methyltransferase_A"/>
</dbReference>
<dbReference type="InterPro" id="IPR048641">
    <property type="entry name" value="RlmN_N"/>
</dbReference>
<dbReference type="InterPro" id="IPR027492">
    <property type="entry name" value="RNA_MTrfase_RlmN"/>
</dbReference>
<dbReference type="InterPro" id="IPR004383">
    <property type="entry name" value="rRNA_lsu_MTrfase_RlmN/Cfr"/>
</dbReference>
<dbReference type="InterPro" id="IPR007197">
    <property type="entry name" value="rSAM"/>
</dbReference>
<dbReference type="NCBIfam" id="TIGR00048">
    <property type="entry name" value="rRNA_mod_RlmN"/>
    <property type="match status" value="1"/>
</dbReference>
<dbReference type="PANTHER" id="PTHR30544">
    <property type="entry name" value="23S RRNA METHYLTRANSFERASE"/>
    <property type="match status" value="1"/>
</dbReference>
<dbReference type="PANTHER" id="PTHR30544:SF5">
    <property type="entry name" value="RADICAL SAM CORE DOMAIN-CONTAINING PROTEIN"/>
    <property type="match status" value="1"/>
</dbReference>
<dbReference type="Pfam" id="PF04055">
    <property type="entry name" value="Radical_SAM"/>
    <property type="match status" value="1"/>
</dbReference>
<dbReference type="Pfam" id="PF21016">
    <property type="entry name" value="RlmN_N"/>
    <property type="match status" value="1"/>
</dbReference>
<dbReference type="PIRSF" id="PIRSF006004">
    <property type="entry name" value="CHP00048"/>
    <property type="match status" value="1"/>
</dbReference>
<dbReference type="SFLD" id="SFLDF00275">
    <property type="entry name" value="adenosine_C2_methyltransferase"/>
    <property type="match status" value="1"/>
</dbReference>
<dbReference type="SFLD" id="SFLDS00029">
    <property type="entry name" value="Radical_SAM"/>
    <property type="match status" value="1"/>
</dbReference>
<dbReference type="SUPFAM" id="SSF102114">
    <property type="entry name" value="Radical SAM enzymes"/>
    <property type="match status" value="1"/>
</dbReference>
<dbReference type="PROSITE" id="PS51918">
    <property type="entry name" value="RADICAL_SAM"/>
    <property type="match status" value="1"/>
</dbReference>
<comment type="function">
    <text evidence="1">Specifically methylates position 2 of adenine 2503 in 23S rRNA and position 2 of adenine 37 in tRNAs.</text>
</comment>
<comment type="catalytic activity">
    <reaction evidence="1">
        <text>adenosine(2503) in 23S rRNA + 2 reduced [2Fe-2S]-[ferredoxin] + 2 S-adenosyl-L-methionine = 2-methyladenosine(2503) in 23S rRNA + 5'-deoxyadenosine + L-methionine + 2 oxidized [2Fe-2S]-[ferredoxin] + S-adenosyl-L-homocysteine</text>
        <dbReference type="Rhea" id="RHEA:42916"/>
        <dbReference type="Rhea" id="RHEA-COMP:10000"/>
        <dbReference type="Rhea" id="RHEA-COMP:10001"/>
        <dbReference type="Rhea" id="RHEA-COMP:10152"/>
        <dbReference type="Rhea" id="RHEA-COMP:10282"/>
        <dbReference type="ChEBI" id="CHEBI:17319"/>
        <dbReference type="ChEBI" id="CHEBI:33737"/>
        <dbReference type="ChEBI" id="CHEBI:33738"/>
        <dbReference type="ChEBI" id="CHEBI:57844"/>
        <dbReference type="ChEBI" id="CHEBI:57856"/>
        <dbReference type="ChEBI" id="CHEBI:59789"/>
        <dbReference type="ChEBI" id="CHEBI:74411"/>
        <dbReference type="ChEBI" id="CHEBI:74497"/>
        <dbReference type="EC" id="2.1.1.192"/>
    </reaction>
</comment>
<comment type="catalytic activity">
    <reaction evidence="1">
        <text>adenosine(37) in tRNA + 2 reduced [2Fe-2S]-[ferredoxin] + 2 S-adenosyl-L-methionine = 2-methyladenosine(37) in tRNA + 5'-deoxyadenosine + L-methionine + 2 oxidized [2Fe-2S]-[ferredoxin] + S-adenosyl-L-homocysteine</text>
        <dbReference type="Rhea" id="RHEA:43332"/>
        <dbReference type="Rhea" id="RHEA-COMP:10000"/>
        <dbReference type="Rhea" id="RHEA-COMP:10001"/>
        <dbReference type="Rhea" id="RHEA-COMP:10162"/>
        <dbReference type="Rhea" id="RHEA-COMP:10485"/>
        <dbReference type="ChEBI" id="CHEBI:17319"/>
        <dbReference type="ChEBI" id="CHEBI:33737"/>
        <dbReference type="ChEBI" id="CHEBI:33738"/>
        <dbReference type="ChEBI" id="CHEBI:57844"/>
        <dbReference type="ChEBI" id="CHEBI:57856"/>
        <dbReference type="ChEBI" id="CHEBI:59789"/>
        <dbReference type="ChEBI" id="CHEBI:74411"/>
        <dbReference type="ChEBI" id="CHEBI:74497"/>
        <dbReference type="EC" id="2.1.1.192"/>
    </reaction>
</comment>
<comment type="cofactor">
    <cofactor evidence="1">
        <name>[4Fe-4S] cluster</name>
        <dbReference type="ChEBI" id="CHEBI:49883"/>
    </cofactor>
    <text evidence="1">Binds 1 [4Fe-4S] cluster. The cluster is coordinated with 3 cysteines and an exchangeable S-adenosyl-L-methionine.</text>
</comment>
<comment type="subcellular location">
    <subcellularLocation>
        <location evidence="1">Cytoplasm</location>
    </subcellularLocation>
</comment>
<comment type="miscellaneous">
    <text evidence="1">Reaction proceeds by a ping-pong mechanism involving intermediate methylation of a conserved cysteine residue.</text>
</comment>
<comment type="similarity">
    <text evidence="1">Belongs to the radical SAM superfamily. RlmN family.</text>
</comment>
<evidence type="ECO:0000255" key="1">
    <source>
        <dbReference type="HAMAP-Rule" id="MF_01849"/>
    </source>
</evidence>
<evidence type="ECO:0000255" key="2">
    <source>
        <dbReference type="PROSITE-ProRule" id="PRU01266"/>
    </source>
</evidence>
<organism>
    <name type="scientific">Gemmatimonas aurantiaca (strain DSM 14586 / JCM 11422 / NBRC 100505 / T-27)</name>
    <dbReference type="NCBI Taxonomy" id="379066"/>
    <lineage>
        <taxon>Bacteria</taxon>
        <taxon>Pseudomonadati</taxon>
        <taxon>Gemmatimonadota</taxon>
        <taxon>Gemmatimonadia</taxon>
        <taxon>Gemmatimonadales</taxon>
        <taxon>Gemmatimonadaceae</taxon>
        <taxon>Gemmatimonas</taxon>
    </lineage>
</organism>
<reference key="1">
    <citation type="submission" date="2006-03" db="EMBL/GenBank/DDBJ databases">
        <title>Complete genome sequence of Gemmatimonas aurantiaca T-27 that represents a novel phylum Gemmatimonadetes.</title>
        <authorList>
            <person name="Takasaki K."/>
            <person name="Ichikawa N."/>
            <person name="Miura H."/>
            <person name="Matsushita S."/>
            <person name="Watanabe Y."/>
            <person name="Oguchi A."/>
            <person name="Ankai A."/>
            <person name="Yashiro I."/>
            <person name="Takahashi M."/>
            <person name="Terui Y."/>
            <person name="Fukui S."/>
            <person name="Yokoyama H."/>
            <person name="Tanikawa S."/>
            <person name="Hanada S."/>
            <person name="Kamagata Y."/>
            <person name="Fujita N."/>
        </authorList>
    </citation>
    <scope>NUCLEOTIDE SEQUENCE [LARGE SCALE GENOMIC DNA]</scope>
    <source>
        <strain>DSM 14586 / JCM 11422 / NBRC 100505 / T-27</strain>
    </source>
</reference>
<keyword id="KW-0004">4Fe-4S</keyword>
<keyword id="KW-0963">Cytoplasm</keyword>
<keyword id="KW-1015">Disulfide bond</keyword>
<keyword id="KW-0408">Iron</keyword>
<keyword id="KW-0411">Iron-sulfur</keyword>
<keyword id="KW-0479">Metal-binding</keyword>
<keyword id="KW-0489">Methyltransferase</keyword>
<keyword id="KW-1185">Reference proteome</keyword>
<keyword id="KW-0698">rRNA processing</keyword>
<keyword id="KW-0949">S-adenosyl-L-methionine</keyword>
<keyword id="KW-0808">Transferase</keyword>
<keyword id="KW-0819">tRNA processing</keyword>
<accession>C1A949</accession>
<protein>
    <recommendedName>
        <fullName evidence="1">Probable dual-specificity RNA methyltransferase RlmN</fullName>
        <ecNumber evidence="1">2.1.1.192</ecNumber>
    </recommendedName>
    <alternativeName>
        <fullName evidence="1">23S rRNA (adenine(2503)-C(2))-methyltransferase</fullName>
    </alternativeName>
    <alternativeName>
        <fullName evidence="1">23S rRNA m2A2503 methyltransferase</fullName>
    </alternativeName>
    <alternativeName>
        <fullName evidence="1">Ribosomal RNA large subunit methyltransferase N</fullName>
    </alternativeName>
    <alternativeName>
        <fullName evidence="1">tRNA (adenine(37)-C(2))-methyltransferase</fullName>
    </alternativeName>
    <alternativeName>
        <fullName evidence="1">tRNA m2A37 methyltransferase</fullName>
    </alternativeName>
</protein>
<name>RLMN_GEMAT</name>